<comment type="cofactor">
    <cofactor evidence="1">
        <name>Zn(2+)</name>
        <dbReference type="ChEBI" id="CHEBI:29105"/>
    </cofactor>
    <text evidence="1">Binds 1 zinc ion per subunit.</text>
</comment>
<comment type="subunit">
    <text evidence="1">Part of the 30S ribosomal subunit.</text>
</comment>
<comment type="similarity">
    <text evidence="1">Belongs to the eukaryotic ribosomal protein eS27 family.</text>
</comment>
<organism>
    <name type="scientific">Pyrococcus abyssi (strain GE5 / Orsay)</name>
    <dbReference type="NCBI Taxonomy" id="272844"/>
    <lineage>
        <taxon>Archaea</taxon>
        <taxon>Methanobacteriati</taxon>
        <taxon>Methanobacteriota</taxon>
        <taxon>Thermococci</taxon>
        <taxon>Thermococcales</taxon>
        <taxon>Thermococcaceae</taxon>
        <taxon>Pyrococcus</taxon>
    </lineage>
</organism>
<gene>
    <name evidence="1" type="primary">rps27e</name>
    <name type="ordered locus">PYRAB17140</name>
    <name type="ORF">PAB7435</name>
</gene>
<proteinExistence type="evidence at protein level"/>
<reference key="1">
    <citation type="journal article" date="2003" name="Mol. Microbiol.">
        <title>An integrated analysis of the genome of the hyperthermophilic archaeon Pyrococcus abyssi.</title>
        <authorList>
            <person name="Cohen G.N."/>
            <person name="Barbe V."/>
            <person name="Flament D."/>
            <person name="Galperin M."/>
            <person name="Heilig R."/>
            <person name="Lecompte O."/>
            <person name="Poch O."/>
            <person name="Prieur D."/>
            <person name="Querellou J."/>
            <person name="Ripp R."/>
            <person name="Thierry J.-C."/>
            <person name="Van der Oost J."/>
            <person name="Weissenbach J."/>
            <person name="Zivanovic Y."/>
            <person name="Forterre P."/>
        </authorList>
    </citation>
    <scope>NUCLEOTIDE SEQUENCE [LARGE SCALE GENOMIC DNA]</scope>
    <source>
        <strain>GE5 / Orsay</strain>
    </source>
</reference>
<reference key="2">
    <citation type="journal article" date="2012" name="Curr. Microbiol.">
        <title>Re-annotation of two hyperthermophilic archaea Pyrococcus abyssi GE5 and Pyrococcus furiosus DSM 3638.</title>
        <authorList>
            <person name="Gao J."/>
            <person name="Wang J."/>
        </authorList>
    </citation>
    <scope>GENOME REANNOTATION</scope>
    <source>
        <strain>GE5 / Orsay</strain>
    </source>
</reference>
<sequence length="65" mass="7176">MALPRNVIPMPRSRFLRVKCIDCGNEQIVFSHPATRVRCNVCGATLVEPTGGKGIIRAKILEVLE</sequence>
<keyword id="KW-0002">3D-structure</keyword>
<keyword id="KW-0479">Metal-binding</keyword>
<keyword id="KW-0687">Ribonucleoprotein</keyword>
<keyword id="KW-0689">Ribosomal protein</keyword>
<keyword id="KW-0862">Zinc</keyword>
<keyword id="KW-0863">Zinc-finger</keyword>
<dbReference type="EMBL" id="AJ248288">
    <property type="protein sequence ID" value="CAB50619.1"/>
    <property type="molecule type" value="Genomic_DNA"/>
</dbReference>
<dbReference type="EMBL" id="HE613800">
    <property type="protein sequence ID" value="CCE71186.1"/>
    <property type="molecule type" value="Genomic_DNA"/>
</dbReference>
<dbReference type="PIR" id="E75022">
    <property type="entry name" value="E75022"/>
</dbReference>
<dbReference type="RefSeq" id="WP_048147173.1">
    <property type="nucleotide sequence ID" value="NC_000868.1"/>
</dbReference>
<dbReference type="PDB" id="6SW9">
    <property type="method" value="EM"/>
    <property type="resolution" value="4.20 A"/>
    <property type="chains" value="W=1-65"/>
</dbReference>
<dbReference type="PDB" id="6SWC">
    <property type="method" value="EM"/>
    <property type="resolution" value="3.30 A"/>
    <property type="chains" value="W=1-65"/>
</dbReference>
<dbReference type="PDB" id="6SWD">
    <property type="method" value="EM"/>
    <property type="resolution" value="3.20 A"/>
    <property type="chains" value="W=1-65"/>
</dbReference>
<dbReference type="PDB" id="7ZAG">
    <property type="method" value="EM"/>
    <property type="resolution" value="2.77 A"/>
    <property type="chains" value="W=1-65"/>
</dbReference>
<dbReference type="PDB" id="7ZAH">
    <property type="method" value="EM"/>
    <property type="resolution" value="2.70 A"/>
    <property type="chains" value="W=1-65"/>
</dbReference>
<dbReference type="PDB" id="7ZAI">
    <property type="method" value="EM"/>
    <property type="resolution" value="2.60 A"/>
    <property type="chains" value="W=1-65"/>
</dbReference>
<dbReference type="PDB" id="7ZHG">
    <property type="method" value="EM"/>
    <property type="resolution" value="2.25 A"/>
    <property type="chains" value="W=1-65"/>
</dbReference>
<dbReference type="PDBsum" id="6SW9"/>
<dbReference type="PDBsum" id="6SWC"/>
<dbReference type="PDBsum" id="6SWD"/>
<dbReference type="PDBsum" id="7ZAG"/>
<dbReference type="PDBsum" id="7ZAH"/>
<dbReference type="PDBsum" id="7ZAI"/>
<dbReference type="PDBsum" id="7ZHG"/>
<dbReference type="EMDB" id="EMD-10320"/>
<dbReference type="EMDB" id="EMD-10322"/>
<dbReference type="EMDB" id="EMD-10323"/>
<dbReference type="EMDB" id="EMD-14579"/>
<dbReference type="EMDB" id="EMD-14580"/>
<dbReference type="EMDB" id="EMD-14581"/>
<dbReference type="EMDB" id="EMD-14731"/>
<dbReference type="EMDB" id="EMD-8148"/>
<dbReference type="SMR" id="Q9UXZ3"/>
<dbReference type="STRING" id="272844.PAB7435"/>
<dbReference type="KEGG" id="pab:PAB7435"/>
<dbReference type="PATRIC" id="fig|272844.11.peg.1831"/>
<dbReference type="eggNOG" id="arCOG04108">
    <property type="taxonomic scope" value="Archaea"/>
</dbReference>
<dbReference type="HOGENOM" id="CLU_199465_0_0_2"/>
<dbReference type="OrthoDB" id="5718at2157"/>
<dbReference type="PhylomeDB" id="Q9UXZ3"/>
<dbReference type="Proteomes" id="UP000000810">
    <property type="component" value="Chromosome"/>
</dbReference>
<dbReference type="Proteomes" id="UP000009139">
    <property type="component" value="Chromosome"/>
</dbReference>
<dbReference type="GO" id="GO:1990904">
    <property type="term" value="C:ribonucleoprotein complex"/>
    <property type="evidence" value="ECO:0007669"/>
    <property type="project" value="UniProtKB-KW"/>
</dbReference>
<dbReference type="GO" id="GO:0005840">
    <property type="term" value="C:ribosome"/>
    <property type="evidence" value="ECO:0007669"/>
    <property type="project" value="UniProtKB-KW"/>
</dbReference>
<dbReference type="GO" id="GO:0003735">
    <property type="term" value="F:structural constituent of ribosome"/>
    <property type="evidence" value="ECO:0007669"/>
    <property type="project" value="InterPro"/>
</dbReference>
<dbReference type="GO" id="GO:0008270">
    <property type="term" value="F:zinc ion binding"/>
    <property type="evidence" value="ECO:0007669"/>
    <property type="project" value="UniProtKB-UniRule"/>
</dbReference>
<dbReference type="GO" id="GO:0006412">
    <property type="term" value="P:translation"/>
    <property type="evidence" value="ECO:0007669"/>
    <property type="project" value="UniProtKB-UniRule"/>
</dbReference>
<dbReference type="FunFam" id="2.20.25.100:FF:000002">
    <property type="entry name" value="30S ribosomal protein S27e"/>
    <property type="match status" value="1"/>
</dbReference>
<dbReference type="Gene3D" id="2.20.25.100">
    <property type="entry name" value="Zn-binding ribosomal proteins"/>
    <property type="match status" value="1"/>
</dbReference>
<dbReference type="HAMAP" id="MF_00371">
    <property type="entry name" value="Ribosomal_eS27"/>
    <property type="match status" value="1"/>
</dbReference>
<dbReference type="InterPro" id="IPR000592">
    <property type="entry name" value="Ribosomal_eS27"/>
</dbReference>
<dbReference type="InterPro" id="IPR023407">
    <property type="entry name" value="Ribosomal_eS27_Zn-bd_dom_sf"/>
</dbReference>
<dbReference type="InterPro" id="IPR011332">
    <property type="entry name" value="Ribosomal_zn-bd"/>
</dbReference>
<dbReference type="NCBIfam" id="NF001629">
    <property type="entry name" value="PRK00415.1"/>
    <property type="match status" value="1"/>
</dbReference>
<dbReference type="Pfam" id="PF01667">
    <property type="entry name" value="Ribosomal_S27e"/>
    <property type="match status" value="1"/>
</dbReference>
<dbReference type="SUPFAM" id="SSF57829">
    <property type="entry name" value="Zn-binding ribosomal proteins"/>
    <property type="match status" value="1"/>
</dbReference>
<dbReference type="PROSITE" id="PS01168">
    <property type="entry name" value="RIBOSOMAL_S27E"/>
    <property type="match status" value="1"/>
</dbReference>
<name>RS27_PYRAB</name>
<feature type="chain" id="PRO_0000149076" description="Small ribosomal subunit protein eS27">
    <location>
        <begin position="1"/>
        <end position="65"/>
    </location>
</feature>
<feature type="zinc finger region" description="C4-type" evidence="1">
    <location>
        <begin position="20"/>
        <end position="42"/>
    </location>
</feature>
<feature type="binding site" evidence="1">
    <location>
        <position position="20"/>
    </location>
    <ligand>
        <name>Zn(2+)</name>
        <dbReference type="ChEBI" id="CHEBI:29105"/>
    </ligand>
</feature>
<feature type="binding site" evidence="1">
    <location>
        <position position="23"/>
    </location>
    <ligand>
        <name>Zn(2+)</name>
        <dbReference type="ChEBI" id="CHEBI:29105"/>
    </ligand>
</feature>
<feature type="binding site" evidence="1">
    <location>
        <position position="39"/>
    </location>
    <ligand>
        <name>Zn(2+)</name>
        <dbReference type="ChEBI" id="CHEBI:29105"/>
    </ligand>
</feature>
<feature type="binding site" evidence="1">
    <location>
        <position position="42"/>
    </location>
    <ligand>
        <name>Zn(2+)</name>
        <dbReference type="ChEBI" id="CHEBI:29105"/>
    </ligand>
</feature>
<feature type="strand" evidence="2">
    <location>
        <begin position="15"/>
        <end position="19"/>
    </location>
</feature>
<feature type="strand" evidence="2">
    <location>
        <begin position="21"/>
        <end position="23"/>
    </location>
</feature>
<feature type="strand" evidence="2">
    <location>
        <begin position="26"/>
        <end position="32"/>
    </location>
</feature>
<feature type="turn" evidence="2">
    <location>
        <begin position="40"/>
        <end position="42"/>
    </location>
</feature>
<feature type="strand" evidence="2">
    <location>
        <begin position="45"/>
        <end position="48"/>
    </location>
</feature>
<feature type="strand" evidence="2">
    <location>
        <begin position="51"/>
        <end position="53"/>
    </location>
</feature>
<feature type="strand" evidence="2">
    <location>
        <begin position="58"/>
        <end position="64"/>
    </location>
</feature>
<accession>Q9UXZ3</accession>
<accession>G8ZK79</accession>
<protein>
    <recommendedName>
        <fullName evidence="1">Small ribosomal subunit protein eS27</fullName>
    </recommendedName>
</protein>
<evidence type="ECO:0000255" key="1">
    <source>
        <dbReference type="HAMAP-Rule" id="MF_00371"/>
    </source>
</evidence>
<evidence type="ECO:0007829" key="2">
    <source>
        <dbReference type="PDB" id="7ZHG"/>
    </source>
</evidence>